<comment type="function">
    <text evidence="1">Catalyzes the reversible adenylation of nicotinate mononucleotide (NaMN) to nicotinic acid adenine dinucleotide (NaAD).</text>
</comment>
<comment type="catalytic activity">
    <reaction evidence="1">
        <text>nicotinate beta-D-ribonucleotide + ATP + H(+) = deamido-NAD(+) + diphosphate</text>
        <dbReference type="Rhea" id="RHEA:22860"/>
        <dbReference type="ChEBI" id="CHEBI:15378"/>
        <dbReference type="ChEBI" id="CHEBI:30616"/>
        <dbReference type="ChEBI" id="CHEBI:33019"/>
        <dbReference type="ChEBI" id="CHEBI:57502"/>
        <dbReference type="ChEBI" id="CHEBI:58437"/>
        <dbReference type="EC" id="2.7.7.18"/>
    </reaction>
</comment>
<comment type="pathway">
    <text evidence="1">Cofactor biosynthesis; NAD(+) biosynthesis; deamido-NAD(+) from nicotinate D-ribonucleotide: step 1/1.</text>
</comment>
<comment type="similarity">
    <text evidence="1">Belongs to the NadD family.</text>
</comment>
<organism>
    <name type="scientific">Escherichia coli O139:H28 (strain E24377A / ETEC)</name>
    <dbReference type="NCBI Taxonomy" id="331111"/>
    <lineage>
        <taxon>Bacteria</taxon>
        <taxon>Pseudomonadati</taxon>
        <taxon>Pseudomonadota</taxon>
        <taxon>Gammaproteobacteria</taxon>
        <taxon>Enterobacterales</taxon>
        <taxon>Enterobacteriaceae</taxon>
        <taxon>Escherichia</taxon>
    </lineage>
</organism>
<reference key="1">
    <citation type="journal article" date="2008" name="J. Bacteriol.">
        <title>The pangenome structure of Escherichia coli: comparative genomic analysis of E. coli commensal and pathogenic isolates.</title>
        <authorList>
            <person name="Rasko D.A."/>
            <person name="Rosovitz M.J."/>
            <person name="Myers G.S.A."/>
            <person name="Mongodin E.F."/>
            <person name="Fricke W.F."/>
            <person name="Gajer P."/>
            <person name="Crabtree J."/>
            <person name="Sebaihia M."/>
            <person name="Thomson N.R."/>
            <person name="Chaudhuri R."/>
            <person name="Henderson I.R."/>
            <person name="Sperandio V."/>
            <person name="Ravel J."/>
        </authorList>
    </citation>
    <scope>NUCLEOTIDE SEQUENCE [LARGE SCALE GENOMIC DNA]</scope>
    <source>
        <strain>E24377A / ETEC</strain>
    </source>
</reference>
<sequence length="213" mass="24528">MKSLQALFGGTFDPVHYGHLKPVETLANLIGLTRVTIIPNNVPPHRPQPEANSVQRKHMLELAIADKPLFTLDERELKRNAPSYTAQTLKEWRQEQGPDVPLAFIIGQDSLLTFPTWYEYETILDNAHLIVCRRPGYPLEMAQPQYQQWLEDHLTHNPEDLHLQPAGKIYLAETPWFNISATIIRERLQNGESCEDLLPEPVLTYINQQGLYR</sequence>
<proteinExistence type="inferred from homology"/>
<keyword id="KW-0067">ATP-binding</keyword>
<keyword id="KW-0520">NAD</keyword>
<keyword id="KW-0547">Nucleotide-binding</keyword>
<keyword id="KW-0548">Nucleotidyltransferase</keyword>
<keyword id="KW-0662">Pyridine nucleotide biosynthesis</keyword>
<keyword id="KW-1185">Reference proteome</keyword>
<keyword id="KW-0808">Transferase</keyword>
<name>NADD_ECO24</name>
<dbReference type="EC" id="2.7.7.18" evidence="1"/>
<dbReference type="EMBL" id="CP000800">
    <property type="protein sequence ID" value="ABV16461.1"/>
    <property type="molecule type" value="Genomic_DNA"/>
</dbReference>
<dbReference type="RefSeq" id="WP_000838889.1">
    <property type="nucleotide sequence ID" value="NC_009801.1"/>
</dbReference>
<dbReference type="SMR" id="A7ZJ28"/>
<dbReference type="GeneID" id="93776843"/>
<dbReference type="KEGG" id="ecw:EcE24377A_0665"/>
<dbReference type="HOGENOM" id="CLU_069765_0_0_6"/>
<dbReference type="UniPathway" id="UPA00253">
    <property type="reaction ID" value="UER00332"/>
</dbReference>
<dbReference type="Proteomes" id="UP000001122">
    <property type="component" value="Chromosome"/>
</dbReference>
<dbReference type="GO" id="GO:0005524">
    <property type="term" value="F:ATP binding"/>
    <property type="evidence" value="ECO:0007669"/>
    <property type="project" value="UniProtKB-KW"/>
</dbReference>
<dbReference type="GO" id="GO:0004515">
    <property type="term" value="F:nicotinate-nucleotide adenylyltransferase activity"/>
    <property type="evidence" value="ECO:0007669"/>
    <property type="project" value="UniProtKB-UniRule"/>
</dbReference>
<dbReference type="GO" id="GO:0009435">
    <property type="term" value="P:NAD biosynthetic process"/>
    <property type="evidence" value="ECO:0007669"/>
    <property type="project" value="UniProtKB-UniRule"/>
</dbReference>
<dbReference type="CDD" id="cd02165">
    <property type="entry name" value="NMNAT"/>
    <property type="match status" value="1"/>
</dbReference>
<dbReference type="FunFam" id="3.40.50.620:FF:000039">
    <property type="entry name" value="Probable nicotinate-nucleotide adenylyltransferase"/>
    <property type="match status" value="1"/>
</dbReference>
<dbReference type="Gene3D" id="3.40.50.620">
    <property type="entry name" value="HUPs"/>
    <property type="match status" value="1"/>
</dbReference>
<dbReference type="HAMAP" id="MF_00244">
    <property type="entry name" value="NaMN_adenylyltr"/>
    <property type="match status" value="1"/>
</dbReference>
<dbReference type="InterPro" id="IPR004821">
    <property type="entry name" value="Cyt_trans-like"/>
</dbReference>
<dbReference type="InterPro" id="IPR005248">
    <property type="entry name" value="NadD/NMNAT"/>
</dbReference>
<dbReference type="InterPro" id="IPR014729">
    <property type="entry name" value="Rossmann-like_a/b/a_fold"/>
</dbReference>
<dbReference type="NCBIfam" id="TIGR00125">
    <property type="entry name" value="cyt_tran_rel"/>
    <property type="match status" value="1"/>
</dbReference>
<dbReference type="NCBIfam" id="TIGR00482">
    <property type="entry name" value="nicotinate (nicotinamide) nucleotide adenylyltransferase"/>
    <property type="match status" value="1"/>
</dbReference>
<dbReference type="NCBIfam" id="NF000839">
    <property type="entry name" value="PRK00071.1-1"/>
    <property type="match status" value="1"/>
</dbReference>
<dbReference type="NCBIfam" id="NF000840">
    <property type="entry name" value="PRK00071.1-3"/>
    <property type="match status" value="1"/>
</dbReference>
<dbReference type="PANTHER" id="PTHR39321">
    <property type="entry name" value="NICOTINATE-NUCLEOTIDE ADENYLYLTRANSFERASE-RELATED"/>
    <property type="match status" value="1"/>
</dbReference>
<dbReference type="PANTHER" id="PTHR39321:SF3">
    <property type="entry name" value="PHOSPHOPANTETHEINE ADENYLYLTRANSFERASE"/>
    <property type="match status" value="1"/>
</dbReference>
<dbReference type="Pfam" id="PF01467">
    <property type="entry name" value="CTP_transf_like"/>
    <property type="match status" value="1"/>
</dbReference>
<dbReference type="SUPFAM" id="SSF52374">
    <property type="entry name" value="Nucleotidylyl transferase"/>
    <property type="match status" value="1"/>
</dbReference>
<feature type="chain" id="PRO_1000058992" description="Probable nicotinate-nucleotide adenylyltransferase">
    <location>
        <begin position="1"/>
        <end position="213"/>
    </location>
</feature>
<accession>A7ZJ28</accession>
<gene>
    <name evidence="1" type="primary">nadD</name>
    <name type="ordered locus">EcE24377A_0665</name>
</gene>
<protein>
    <recommendedName>
        <fullName evidence="1">Probable nicotinate-nucleotide adenylyltransferase</fullName>
        <ecNumber evidence="1">2.7.7.18</ecNumber>
    </recommendedName>
    <alternativeName>
        <fullName evidence="1">Deamido-NAD(+) diphosphorylase</fullName>
    </alternativeName>
    <alternativeName>
        <fullName evidence="1">Deamido-NAD(+) pyrophosphorylase</fullName>
    </alternativeName>
    <alternativeName>
        <fullName evidence="1">Nicotinate mononucleotide adenylyltransferase</fullName>
        <shortName evidence="1">NaMN adenylyltransferase</shortName>
    </alternativeName>
</protein>
<evidence type="ECO:0000255" key="1">
    <source>
        <dbReference type="HAMAP-Rule" id="MF_00244"/>
    </source>
</evidence>